<comment type="function">
    <text evidence="1">Converts the preformed base xanthine, a product of nucleic acid breakdown, to xanthosine 5'-monophosphate (XMP), so it can be reused for RNA or DNA synthesis.</text>
</comment>
<comment type="catalytic activity">
    <reaction evidence="1">
        <text>XMP + diphosphate = xanthine + 5-phospho-alpha-D-ribose 1-diphosphate</text>
        <dbReference type="Rhea" id="RHEA:10800"/>
        <dbReference type="ChEBI" id="CHEBI:17712"/>
        <dbReference type="ChEBI" id="CHEBI:33019"/>
        <dbReference type="ChEBI" id="CHEBI:57464"/>
        <dbReference type="ChEBI" id="CHEBI:58017"/>
        <dbReference type="EC" id="2.4.2.22"/>
    </reaction>
</comment>
<comment type="pathway">
    <text evidence="1">Purine metabolism; XMP biosynthesis via salvage pathway; XMP from xanthine: step 1/1.</text>
</comment>
<comment type="subunit">
    <text evidence="1">Homodimer.</text>
</comment>
<comment type="subcellular location">
    <subcellularLocation>
        <location evidence="1">Cytoplasm</location>
    </subcellularLocation>
</comment>
<comment type="similarity">
    <text evidence="1">Belongs to the purine/pyrimidine phosphoribosyltransferase family. Xpt subfamily.</text>
</comment>
<proteinExistence type="inferred from homology"/>
<gene>
    <name evidence="1" type="primary">xpt</name>
    <name type="ordered locus">PA14_69940</name>
</gene>
<reference key="1">
    <citation type="journal article" date="2006" name="Genome Biol.">
        <title>Genomic analysis reveals that Pseudomonas aeruginosa virulence is combinatorial.</title>
        <authorList>
            <person name="Lee D.G."/>
            <person name="Urbach J.M."/>
            <person name="Wu G."/>
            <person name="Liberati N.T."/>
            <person name="Feinbaum R.L."/>
            <person name="Miyata S."/>
            <person name="Diggins L.T."/>
            <person name="He J."/>
            <person name="Saucier M."/>
            <person name="Deziel E."/>
            <person name="Friedman L."/>
            <person name="Li L."/>
            <person name="Grills G."/>
            <person name="Montgomery K."/>
            <person name="Kucherlapati R."/>
            <person name="Rahme L.G."/>
            <person name="Ausubel F.M."/>
        </authorList>
    </citation>
    <scope>NUCLEOTIDE SEQUENCE [LARGE SCALE GENOMIC DNA]</scope>
    <source>
        <strain>UCBPP-PA14</strain>
    </source>
</reference>
<keyword id="KW-0963">Cytoplasm</keyword>
<keyword id="KW-0328">Glycosyltransferase</keyword>
<keyword id="KW-0660">Purine salvage</keyword>
<keyword id="KW-0808">Transferase</keyword>
<protein>
    <recommendedName>
        <fullName evidence="1">Xanthine phosphoribosyltransferase</fullName>
        <shortName evidence="1">XPRTase</shortName>
        <ecNumber evidence="1">2.4.2.22</ecNumber>
    </recommendedName>
</protein>
<feature type="chain" id="PRO_0000339729" description="Xanthine phosphoribosyltransferase">
    <location>
        <begin position="1"/>
        <end position="190"/>
    </location>
</feature>
<feature type="binding site" evidence="1">
    <location>
        <position position="20"/>
    </location>
    <ligand>
        <name>xanthine</name>
        <dbReference type="ChEBI" id="CHEBI:17712"/>
    </ligand>
</feature>
<feature type="binding site" evidence="1">
    <location>
        <position position="27"/>
    </location>
    <ligand>
        <name>xanthine</name>
        <dbReference type="ChEBI" id="CHEBI:17712"/>
    </ligand>
</feature>
<feature type="binding site" evidence="1">
    <location>
        <begin position="128"/>
        <end position="132"/>
    </location>
    <ligand>
        <name>5-phospho-alpha-D-ribose 1-diphosphate</name>
        <dbReference type="ChEBI" id="CHEBI:58017"/>
    </ligand>
</feature>
<feature type="binding site" evidence="1">
    <location>
        <position position="156"/>
    </location>
    <ligand>
        <name>xanthine</name>
        <dbReference type="ChEBI" id="CHEBI:17712"/>
    </ligand>
</feature>
<sequence>MDILKDKIRSEGIVLSEHVLKVDAFLNHQIDPQLMQQVGHAFAMRFRDQGITKIVTIEASGIAPAVMAGLELGVPVIFARKYQSLTLKDNLYISKVFSFTKQTESTIAISAKHLNAHDHVLVIDDFLANGHAAKALIDLIGQAGASIAGLGIVIEKSFQDGRALLESEGYRVESLARVKSLAGGQVEFLD</sequence>
<organism>
    <name type="scientific">Pseudomonas aeruginosa (strain UCBPP-PA14)</name>
    <dbReference type="NCBI Taxonomy" id="208963"/>
    <lineage>
        <taxon>Bacteria</taxon>
        <taxon>Pseudomonadati</taxon>
        <taxon>Pseudomonadota</taxon>
        <taxon>Gammaproteobacteria</taxon>
        <taxon>Pseudomonadales</taxon>
        <taxon>Pseudomonadaceae</taxon>
        <taxon>Pseudomonas</taxon>
    </lineage>
</organism>
<evidence type="ECO:0000255" key="1">
    <source>
        <dbReference type="HAMAP-Rule" id="MF_01184"/>
    </source>
</evidence>
<name>XPT_PSEAB</name>
<accession>Q02E64</accession>
<dbReference type="EC" id="2.4.2.22" evidence="1"/>
<dbReference type="EMBL" id="CP000438">
    <property type="protein sequence ID" value="ABJ14681.1"/>
    <property type="molecule type" value="Genomic_DNA"/>
</dbReference>
<dbReference type="RefSeq" id="WP_003096508.1">
    <property type="nucleotide sequence ID" value="NZ_CP034244.1"/>
</dbReference>
<dbReference type="SMR" id="Q02E64"/>
<dbReference type="KEGG" id="pau:PA14_69940"/>
<dbReference type="PseudoCAP" id="PA14_69940"/>
<dbReference type="HOGENOM" id="CLU_099015_0_0_6"/>
<dbReference type="BioCyc" id="PAER208963:G1G74-5892-MONOMER"/>
<dbReference type="UniPathway" id="UPA00602">
    <property type="reaction ID" value="UER00658"/>
</dbReference>
<dbReference type="Proteomes" id="UP000000653">
    <property type="component" value="Chromosome"/>
</dbReference>
<dbReference type="GO" id="GO:0005737">
    <property type="term" value="C:cytoplasm"/>
    <property type="evidence" value="ECO:0007669"/>
    <property type="project" value="UniProtKB-SubCell"/>
</dbReference>
<dbReference type="GO" id="GO:0000310">
    <property type="term" value="F:xanthine phosphoribosyltransferase activity"/>
    <property type="evidence" value="ECO:0007669"/>
    <property type="project" value="UniProtKB-UniRule"/>
</dbReference>
<dbReference type="GO" id="GO:0006166">
    <property type="term" value="P:purine ribonucleoside salvage"/>
    <property type="evidence" value="ECO:0007669"/>
    <property type="project" value="UniProtKB-KW"/>
</dbReference>
<dbReference type="GO" id="GO:0046110">
    <property type="term" value="P:xanthine metabolic process"/>
    <property type="evidence" value="ECO:0007669"/>
    <property type="project" value="InterPro"/>
</dbReference>
<dbReference type="GO" id="GO:0032265">
    <property type="term" value="P:XMP salvage"/>
    <property type="evidence" value="ECO:0007669"/>
    <property type="project" value="UniProtKB-UniRule"/>
</dbReference>
<dbReference type="CDD" id="cd06223">
    <property type="entry name" value="PRTases_typeI"/>
    <property type="match status" value="1"/>
</dbReference>
<dbReference type="FunFam" id="3.40.50.2020:FF:000027">
    <property type="entry name" value="Xanthine phosphoribosyltransferase"/>
    <property type="match status" value="1"/>
</dbReference>
<dbReference type="Gene3D" id="3.40.50.2020">
    <property type="match status" value="1"/>
</dbReference>
<dbReference type="HAMAP" id="MF_01184">
    <property type="entry name" value="XPRTase"/>
    <property type="match status" value="1"/>
</dbReference>
<dbReference type="InterPro" id="IPR000836">
    <property type="entry name" value="PRibTrfase_dom"/>
</dbReference>
<dbReference type="InterPro" id="IPR029057">
    <property type="entry name" value="PRTase-like"/>
</dbReference>
<dbReference type="InterPro" id="IPR050118">
    <property type="entry name" value="Pur/Pyrimidine_PRTase"/>
</dbReference>
<dbReference type="InterPro" id="IPR010079">
    <property type="entry name" value="Xanthine_PRibTrfase"/>
</dbReference>
<dbReference type="NCBIfam" id="NF006671">
    <property type="entry name" value="PRK09219.1"/>
    <property type="match status" value="1"/>
</dbReference>
<dbReference type="NCBIfam" id="TIGR01744">
    <property type="entry name" value="XPRTase"/>
    <property type="match status" value="1"/>
</dbReference>
<dbReference type="PANTHER" id="PTHR43864">
    <property type="entry name" value="HYPOXANTHINE/GUANINE PHOSPHORIBOSYLTRANSFERASE"/>
    <property type="match status" value="1"/>
</dbReference>
<dbReference type="PANTHER" id="PTHR43864:SF1">
    <property type="entry name" value="XANTHINE PHOSPHORIBOSYLTRANSFERASE"/>
    <property type="match status" value="1"/>
</dbReference>
<dbReference type="Pfam" id="PF00156">
    <property type="entry name" value="Pribosyltran"/>
    <property type="match status" value="1"/>
</dbReference>
<dbReference type="SUPFAM" id="SSF53271">
    <property type="entry name" value="PRTase-like"/>
    <property type="match status" value="1"/>
</dbReference>